<feature type="chain" id="PRO_0000288013" description="Energy-coupling factor transporter ATP-binding protein EcfA2">
    <location>
        <begin position="1"/>
        <end position="280"/>
    </location>
</feature>
<feature type="domain" description="ABC transporter" evidence="1">
    <location>
        <begin position="3"/>
        <end position="245"/>
    </location>
</feature>
<feature type="binding site" evidence="1">
    <location>
        <begin position="40"/>
        <end position="47"/>
    </location>
    <ligand>
        <name>ATP</name>
        <dbReference type="ChEBI" id="CHEBI:30616"/>
    </ligand>
</feature>
<gene>
    <name evidence="1" type="primary">ecfA2</name>
    <name type="synonym">cbiO2</name>
    <name type="ordered locus">str2008</name>
</gene>
<dbReference type="EC" id="7.-.-.-" evidence="1"/>
<dbReference type="EMBL" id="CP000024">
    <property type="protein sequence ID" value="AAV63518.1"/>
    <property type="molecule type" value="Genomic_DNA"/>
</dbReference>
<dbReference type="RefSeq" id="WP_002947774.1">
    <property type="nucleotide sequence ID" value="NC_006449.1"/>
</dbReference>
<dbReference type="SMR" id="Q5LXJ4"/>
<dbReference type="KEGG" id="stc:str2008"/>
<dbReference type="HOGENOM" id="CLU_000604_1_22_9"/>
<dbReference type="GO" id="GO:0043190">
    <property type="term" value="C:ATP-binding cassette (ABC) transporter complex"/>
    <property type="evidence" value="ECO:0007669"/>
    <property type="project" value="TreeGrafter"/>
</dbReference>
<dbReference type="GO" id="GO:0005524">
    <property type="term" value="F:ATP binding"/>
    <property type="evidence" value="ECO:0007669"/>
    <property type="project" value="UniProtKB-KW"/>
</dbReference>
<dbReference type="GO" id="GO:0016887">
    <property type="term" value="F:ATP hydrolysis activity"/>
    <property type="evidence" value="ECO:0007669"/>
    <property type="project" value="InterPro"/>
</dbReference>
<dbReference type="GO" id="GO:0042626">
    <property type="term" value="F:ATPase-coupled transmembrane transporter activity"/>
    <property type="evidence" value="ECO:0007669"/>
    <property type="project" value="TreeGrafter"/>
</dbReference>
<dbReference type="CDD" id="cd03225">
    <property type="entry name" value="ABC_cobalt_CbiO_domain1"/>
    <property type="match status" value="1"/>
</dbReference>
<dbReference type="FunFam" id="3.40.50.300:FF:000224">
    <property type="entry name" value="Energy-coupling factor transporter ATP-binding protein EcfA"/>
    <property type="match status" value="1"/>
</dbReference>
<dbReference type="Gene3D" id="3.40.50.300">
    <property type="entry name" value="P-loop containing nucleotide triphosphate hydrolases"/>
    <property type="match status" value="1"/>
</dbReference>
<dbReference type="InterPro" id="IPR003593">
    <property type="entry name" value="AAA+_ATPase"/>
</dbReference>
<dbReference type="InterPro" id="IPR003439">
    <property type="entry name" value="ABC_transporter-like_ATP-bd"/>
</dbReference>
<dbReference type="InterPro" id="IPR017871">
    <property type="entry name" value="ABC_transporter-like_CS"/>
</dbReference>
<dbReference type="InterPro" id="IPR015856">
    <property type="entry name" value="ABC_transpr_CbiO/EcfA_su"/>
</dbReference>
<dbReference type="InterPro" id="IPR050095">
    <property type="entry name" value="ECF_ABC_transporter_ATP-bd"/>
</dbReference>
<dbReference type="InterPro" id="IPR030946">
    <property type="entry name" value="EcfA2"/>
</dbReference>
<dbReference type="InterPro" id="IPR027417">
    <property type="entry name" value="P-loop_NTPase"/>
</dbReference>
<dbReference type="NCBIfam" id="TIGR04521">
    <property type="entry name" value="ECF_ATPase_2"/>
    <property type="match status" value="1"/>
</dbReference>
<dbReference type="NCBIfam" id="NF010155">
    <property type="entry name" value="PRK13634.1"/>
    <property type="match status" value="1"/>
</dbReference>
<dbReference type="PANTHER" id="PTHR43553:SF27">
    <property type="entry name" value="ENERGY-COUPLING FACTOR TRANSPORTER ATP-BINDING PROTEIN ECFA2"/>
    <property type="match status" value="1"/>
</dbReference>
<dbReference type="PANTHER" id="PTHR43553">
    <property type="entry name" value="HEAVY METAL TRANSPORTER"/>
    <property type="match status" value="1"/>
</dbReference>
<dbReference type="Pfam" id="PF00005">
    <property type="entry name" value="ABC_tran"/>
    <property type="match status" value="1"/>
</dbReference>
<dbReference type="SMART" id="SM00382">
    <property type="entry name" value="AAA"/>
    <property type="match status" value="1"/>
</dbReference>
<dbReference type="SUPFAM" id="SSF52540">
    <property type="entry name" value="P-loop containing nucleoside triphosphate hydrolases"/>
    <property type="match status" value="1"/>
</dbReference>
<dbReference type="PROSITE" id="PS00211">
    <property type="entry name" value="ABC_TRANSPORTER_1"/>
    <property type="match status" value="1"/>
</dbReference>
<dbReference type="PROSITE" id="PS50893">
    <property type="entry name" value="ABC_TRANSPORTER_2"/>
    <property type="match status" value="1"/>
</dbReference>
<dbReference type="PROSITE" id="PS51246">
    <property type="entry name" value="CBIO"/>
    <property type="match status" value="1"/>
</dbReference>
<comment type="function">
    <text evidence="1">ATP-binding (A) component of a common energy-coupling factor (ECF) ABC-transporter complex. Unlike classic ABC transporters this ECF transporter provides the energy necessary to transport a number of different substrates.</text>
</comment>
<comment type="subunit">
    <text evidence="1">Forms a stable energy-coupling factor (ECF) transporter complex composed of 2 membrane-embedded substrate-binding proteins (S component), 2 ATP-binding proteins (A component) and 2 transmembrane proteins (T component).</text>
</comment>
<comment type="subcellular location">
    <subcellularLocation>
        <location evidence="1">Cell membrane</location>
        <topology evidence="1">Peripheral membrane protein</topology>
    </subcellularLocation>
</comment>
<comment type="similarity">
    <text evidence="1">Belongs to the ABC transporter superfamily. Energy-coupling factor EcfA family.</text>
</comment>
<sequence length="280" mass="30942">MGISLENVSYTYQSGTPFERRALFDMTVTIKDGSYTAFIGHTGSGKSTIMQLLNGLYLPTSGQVKVDDTIINSQSKNKEIKPIRKKVGLVFQFPESQLFAETVLEDIAFGPQNFGVSKEEAEQRALESLRLVGLSDELRDQNPFDLSGGQMRRVAIAGILAMQPDILVLDEPTAGLDPQGRKELMSLFKQLHLSGITIVLVTHLMDDVADYATAVNVMEKGRLVLSGTPKDVFQKVAFLKEKQLGVPKITEFALQLQEKGYSFESLPITIEEFVEVLVHG</sequence>
<organism>
    <name type="scientific">Streptococcus thermophilus (strain CNRZ 1066)</name>
    <dbReference type="NCBI Taxonomy" id="299768"/>
    <lineage>
        <taxon>Bacteria</taxon>
        <taxon>Bacillati</taxon>
        <taxon>Bacillota</taxon>
        <taxon>Bacilli</taxon>
        <taxon>Lactobacillales</taxon>
        <taxon>Streptococcaceae</taxon>
        <taxon>Streptococcus</taxon>
    </lineage>
</organism>
<proteinExistence type="inferred from homology"/>
<reference key="1">
    <citation type="journal article" date="2004" name="Nat. Biotechnol.">
        <title>Complete sequence and comparative genome analysis of the dairy bacterium Streptococcus thermophilus.</title>
        <authorList>
            <person name="Bolotin A."/>
            <person name="Quinquis B."/>
            <person name="Renault P."/>
            <person name="Sorokin A."/>
            <person name="Ehrlich S.D."/>
            <person name="Kulakauskas S."/>
            <person name="Lapidus A."/>
            <person name="Goltsman E."/>
            <person name="Mazur M."/>
            <person name="Pusch G.D."/>
            <person name="Fonstein M."/>
            <person name="Overbeek R."/>
            <person name="Kyprides N."/>
            <person name="Purnelle B."/>
            <person name="Prozzi D."/>
            <person name="Ngui K."/>
            <person name="Masuy D."/>
            <person name="Hancy F."/>
            <person name="Burteau S."/>
            <person name="Boutry M."/>
            <person name="Delcour J."/>
            <person name="Goffeau A."/>
            <person name="Hols P."/>
        </authorList>
    </citation>
    <scope>NUCLEOTIDE SEQUENCE [LARGE SCALE GENOMIC DNA]</scope>
    <source>
        <strain>CNRZ 1066</strain>
    </source>
</reference>
<protein>
    <recommendedName>
        <fullName evidence="1">Energy-coupling factor transporter ATP-binding protein EcfA2</fullName>
        <shortName evidence="1">ECF transporter A component EcfA2</shortName>
        <ecNumber evidence="1">7.-.-.-</ecNumber>
    </recommendedName>
</protein>
<accession>Q5LXJ4</accession>
<keyword id="KW-0067">ATP-binding</keyword>
<keyword id="KW-1003">Cell membrane</keyword>
<keyword id="KW-0472">Membrane</keyword>
<keyword id="KW-0547">Nucleotide-binding</keyword>
<keyword id="KW-1278">Translocase</keyword>
<keyword id="KW-0813">Transport</keyword>
<evidence type="ECO:0000255" key="1">
    <source>
        <dbReference type="HAMAP-Rule" id="MF_01710"/>
    </source>
</evidence>
<name>ECFA2_STRT1</name>